<dbReference type="EC" id="4.3.2.10" evidence="1"/>
<dbReference type="EMBL" id="CP001233">
    <property type="protein sequence ID" value="ACP05411.1"/>
    <property type="molecule type" value="Genomic_DNA"/>
</dbReference>
<dbReference type="RefSeq" id="WP_000880146.1">
    <property type="nucleotide sequence ID" value="NC_012578.1"/>
</dbReference>
<dbReference type="SMR" id="C3LLI5"/>
<dbReference type="GeneID" id="94014095"/>
<dbReference type="KEGG" id="vcm:VCM66_1094"/>
<dbReference type="HOGENOM" id="CLU_048577_4_0_6"/>
<dbReference type="UniPathway" id="UPA00031">
    <property type="reaction ID" value="UER00010"/>
</dbReference>
<dbReference type="Proteomes" id="UP000001217">
    <property type="component" value="Chromosome I"/>
</dbReference>
<dbReference type="GO" id="GO:0005737">
    <property type="term" value="C:cytoplasm"/>
    <property type="evidence" value="ECO:0007669"/>
    <property type="project" value="UniProtKB-SubCell"/>
</dbReference>
<dbReference type="GO" id="GO:0000107">
    <property type="term" value="F:imidazoleglycerol-phosphate synthase activity"/>
    <property type="evidence" value="ECO:0007669"/>
    <property type="project" value="UniProtKB-UniRule"/>
</dbReference>
<dbReference type="GO" id="GO:0016829">
    <property type="term" value="F:lyase activity"/>
    <property type="evidence" value="ECO:0007669"/>
    <property type="project" value="UniProtKB-KW"/>
</dbReference>
<dbReference type="GO" id="GO:0000105">
    <property type="term" value="P:L-histidine biosynthetic process"/>
    <property type="evidence" value="ECO:0007669"/>
    <property type="project" value="UniProtKB-UniRule"/>
</dbReference>
<dbReference type="CDD" id="cd04731">
    <property type="entry name" value="HisF"/>
    <property type="match status" value="1"/>
</dbReference>
<dbReference type="FunFam" id="3.20.20.70:FF:000006">
    <property type="entry name" value="Imidazole glycerol phosphate synthase subunit HisF"/>
    <property type="match status" value="1"/>
</dbReference>
<dbReference type="Gene3D" id="3.20.20.70">
    <property type="entry name" value="Aldolase class I"/>
    <property type="match status" value="1"/>
</dbReference>
<dbReference type="HAMAP" id="MF_01013">
    <property type="entry name" value="HisF"/>
    <property type="match status" value="1"/>
</dbReference>
<dbReference type="InterPro" id="IPR013785">
    <property type="entry name" value="Aldolase_TIM"/>
</dbReference>
<dbReference type="InterPro" id="IPR006062">
    <property type="entry name" value="His_biosynth"/>
</dbReference>
<dbReference type="InterPro" id="IPR004651">
    <property type="entry name" value="HisF"/>
</dbReference>
<dbReference type="InterPro" id="IPR050064">
    <property type="entry name" value="IGPS_HisA/HisF"/>
</dbReference>
<dbReference type="InterPro" id="IPR011060">
    <property type="entry name" value="RibuloseP-bd_barrel"/>
</dbReference>
<dbReference type="NCBIfam" id="TIGR00735">
    <property type="entry name" value="hisF"/>
    <property type="match status" value="1"/>
</dbReference>
<dbReference type="PANTHER" id="PTHR21235:SF2">
    <property type="entry name" value="IMIDAZOLE GLYCEROL PHOSPHATE SYNTHASE HISHF"/>
    <property type="match status" value="1"/>
</dbReference>
<dbReference type="PANTHER" id="PTHR21235">
    <property type="entry name" value="IMIDAZOLE GLYCEROL PHOSPHATE SYNTHASE SUBUNIT HISF/H IGP SYNTHASE SUBUNIT HISF/H"/>
    <property type="match status" value="1"/>
</dbReference>
<dbReference type="Pfam" id="PF00977">
    <property type="entry name" value="His_biosynth"/>
    <property type="match status" value="1"/>
</dbReference>
<dbReference type="SUPFAM" id="SSF51366">
    <property type="entry name" value="Ribulose-phoshate binding barrel"/>
    <property type="match status" value="1"/>
</dbReference>
<gene>
    <name evidence="1" type="primary">hisF</name>
    <name type="ordered locus">VCM66_1094</name>
</gene>
<proteinExistence type="inferred from homology"/>
<keyword id="KW-0028">Amino-acid biosynthesis</keyword>
<keyword id="KW-0963">Cytoplasm</keyword>
<keyword id="KW-0368">Histidine biosynthesis</keyword>
<keyword id="KW-0456">Lyase</keyword>
<feature type="chain" id="PRO_1000148943" description="Imidazole glycerol phosphate synthase subunit HisF">
    <location>
        <begin position="1"/>
        <end position="257"/>
    </location>
</feature>
<feature type="active site" evidence="1">
    <location>
        <position position="11"/>
    </location>
</feature>
<feature type="active site" evidence="1">
    <location>
        <position position="130"/>
    </location>
</feature>
<name>HIS6_VIBCM</name>
<protein>
    <recommendedName>
        <fullName evidence="1">Imidazole glycerol phosphate synthase subunit HisF</fullName>
        <ecNumber evidence="1">4.3.2.10</ecNumber>
    </recommendedName>
    <alternativeName>
        <fullName evidence="1">IGP synthase cyclase subunit</fullName>
    </alternativeName>
    <alternativeName>
        <fullName evidence="1">IGP synthase subunit HisF</fullName>
    </alternativeName>
    <alternativeName>
        <fullName evidence="1">ImGP synthase subunit HisF</fullName>
        <shortName evidence="1">IGPS subunit HisF</shortName>
    </alternativeName>
</protein>
<sequence length="257" mass="28338">MLAKRIIPCLDVRDGQVVKGVQFRNHEIIGDIVPLAKRYAEEGADELVFYDITASSDGRVVDKSWVARVAEVIDIPFCVAGGIKSAQDAARILEFGADKVSINSPALANPQLITDLADRFGVQCIVVGIDSYFDKETGQYQVYQFTGDESRTRATQWQTCDWVQEVQKRGAGEIVLNMMNQDGVRNGYDLEQLNLVRSVCRVPLIASGGAGAMEHFAQAFTQANVDGALAASVFHKQIINIGELKQYLKQQGIEVRR</sequence>
<reference key="1">
    <citation type="journal article" date="2008" name="PLoS ONE">
        <title>A recalibrated molecular clock and independent origins for the cholera pandemic clones.</title>
        <authorList>
            <person name="Feng L."/>
            <person name="Reeves P.R."/>
            <person name="Lan R."/>
            <person name="Ren Y."/>
            <person name="Gao C."/>
            <person name="Zhou Z."/>
            <person name="Ren Y."/>
            <person name="Cheng J."/>
            <person name="Wang W."/>
            <person name="Wang J."/>
            <person name="Qian W."/>
            <person name="Li D."/>
            <person name="Wang L."/>
        </authorList>
    </citation>
    <scope>NUCLEOTIDE SEQUENCE [LARGE SCALE GENOMIC DNA]</scope>
    <source>
        <strain>M66-2</strain>
    </source>
</reference>
<organism>
    <name type="scientific">Vibrio cholerae serotype O1 (strain M66-2)</name>
    <dbReference type="NCBI Taxonomy" id="579112"/>
    <lineage>
        <taxon>Bacteria</taxon>
        <taxon>Pseudomonadati</taxon>
        <taxon>Pseudomonadota</taxon>
        <taxon>Gammaproteobacteria</taxon>
        <taxon>Vibrionales</taxon>
        <taxon>Vibrionaceae</taxon>
        <taxon>Vibrio</taxon>
    </lineage>
</organism>
<evidence type="ECO:0000255" key="1">
    <source>
        <dbReference type="HAMAP-Rule" id="MF_01013"/>
    </source>
</evidence>
<accession>C3LLI5</accession>
<comment type="function">
    <text evidence="1">IGPS catalyzes the conversion of PRFAR and glutamine to IGP, AICAR and glutamate. The HisF subunit catalyzes the cyclization activity that produces IGP and AICAR from PRFAR using the ammonia provided by the HisH subunit.</text>
</comment>
<comment type="catalytic activity">
    <reaction evidence="1">
        <text>5-[(5-phospho-1-deoxy-D-ribulos-1-ylimino)methylamino]-1-(5-phospho-beta-D-ribosyl)imidazole-4-carboxamide + L-glutamine = D-erythro-1-(imidazol-4-yl)glycerol 3-phosphate + 5-amino-1-(5-phospho-beta-D-ribosyl)imidazole-4-carboxamide + L-glutamate + H(+)</text>
        <dbReference type="Rhea" id="RHEA:24793"/>
        <dbReference type="ChEBI" id="CHEBI:15378"/>
        <dbReference type="ChEBI" id="CHEBI:29985"/>
        <dbReference type="ChEBI" id="CHEBI:58278"/>
        <dbReference type="ChEBI" id="CHEBI:58359"/>
        <dbReference type="ChEBI" id="CHEBI:58475"/>
        <dbReference type="ChEBI" id="CHEBI:58525"/>
        <dbReference type="EC" id="4.3.2.10"/>
    </reaction>
</comment>
<comment type="pathway">
    <text evidence="1">Amino-acid biosynthesis; L-histidine biosynthesis; L-histidine from 5-phospho-alpha-D-ribose 1-diphosphate: step 5/9.</text>
</comment>
<comment type="subunit">
    <text evidence="1">Heterodimer of HisH and HisF.</text>
</comment>
<comment type="subcellular location">
    <subcellularLocation>
        <location evidence="1">Cytoplasm</location>
    </subcellularLocation>
</comment>
<comment type="similarity">
    <text evidence="1">Belongs to the HisA/HisF family.</text>
</comment>